<gene>
    <name type="primary">EPO</name>
</gene>
<keyword id="KW-0002">3D-structure</keyword>
<keyword id="KW-0985">Congenital erythrocytosis</keyword>
<keyword id="KW-0903">Direct protein sequencing</keyword>
<keyword id="KW-0225">Disease variant</keyword>
<keyword id="KW-1015">Disulfide bond</keyword>
<keyword id="KW-0265">Erythrocyte maturation</keyword>
<keyword id="KW-0325">Glycoprotein</keyword>
<keyword id="KW-0372">Hormone</keyword>
<keyword id="KW-0582">Pharmaceutical</keyword>
<keyword id="KW-1185">Reference proteome</keyword>
<keyword id="KW-0964">Secreted</keyword>
<keyword id="KW-0732">Signal</keyword>
<protein>
    <recommendedName>
        <fullName evidence="9">Erythropoietin</fullName>
    </recommendedName>
    <innName>Epoetin</innName>
</protein>
<proteinExistence type="evidence at protein level"/>
<comment type="function">
    <text evidence="2 8">Hormone involved in the regulation of erythrocyte proliferation and differentiation and the maintenance of a physiological level of circulating erythrocyte mass (PubMed:28283061). Binds to EPOR leading to EPOR dimerization and JAK2 activation thereby activating specific downstream effectors, including STAT1 and STAT3 (PubMed:9774108).</text>
</comment>
<comment type="interaction">
    <interactant intactId="EBI-1027362">
        <id>P01588</id>
    </interactant>
    <interactant intactId="EBI-702121">
        <id>P54760</id>
        <label>EPHB4</label>
    </interactant>
    <organismsDiffer>false</organismsDiffer>
    <experiments>6</experiments>
</comment>
<comment type="interaction">
    <interactant intactId="EBI-1027362">
        <id>P01588</id>
    </interactant>
    <interactant intactId="EBI-617321">
        <id>P19235</id>
        <label>EPOR</label>
    </interactant>
    <organismsDiffer>false</organismsDiffer>
    <experiments>3</experiments>
</comment>
<comment type="interaction">
    <interactant intactId="EBI-1027362">
        <id>P01588</id>
    </interactant>
    <interactant intactId="EBI-12586254">
        <id>P33908</id>
        <label>MAN1A1</label>
    </interactant>
    <organismsDiffer>false</organismsDiffer>
    <experiments>2</experiments>
</comment>
<comment type="interaction">
    <interactant intactId="EBI-11508463">
        <id>PRO_0000008401</id>
    </interactant>
    <interactant intactId="EBI-617321">
        <id>P19235</id>
        <label>EPOR</label>
    </interactant>
    <organismsDiffer>false</organismsDiffer>
    <experiments>2</experiments>
</comment>
<comment type="subcellular location">
    <subcellularLocation>
        <location evidence="4">Secreted</location>
    </subcellularLocation>
</comment>
<comment type="tissue specificity">
    <text evidence="5">Produced by kidney or liver of adult mammals and by liver of fetal or neonatal mammals.</text>
</comment>
<comment type="disease">
    <disease id="DI-02755">
        <name>Microvascular complications of diabetes 2</name>
        <acronym>MVCD2</acronym>
        <description>Pathological conditions that develop in numerous tissues and organs as a consequence of diabetes mellitus. They include diabetic retinopathy, diabetic nephropathy leading to end-stage renal disease, and diabetic neuropathy. Diabetic retinopathy remains the major cause of new-onset blindness among diabetic adults. It is characterized by vascular permeability and increased tissue ischemia and angiogenesis.</description>
        <dbReference type="MIM" id="612623"/>
    </disease>
    <text>Disease susceptibility is associated with variants affecting the gene represented in this entry.</text>
</comment>
<comment type="disease" evidence="1 3">
    <disease id="DI-05215">
        <name>Erythrocytosis, familial, 5</name>
        <acronym>ECYT5</acronym>
        <description>An autosomal dominant disorder characterized by elevated serum hemoglobin and hematocrit. Some patients have increased serum erythropoietin levels.</description>
        <dbReference type="MIM" id="617907"/>
    </disease>
    <text>The disease is caused by variants affecting the gene represented in this entry.</text>
</comment>
<comment type="disease" evidence="2">
    <disease id="DI-05222">
        <name>Diamond-Blackfan anemia-like</name>
        <acronym>DBAL</acronym>
        <description>An autosomal recessive hematologic disease characterized by severe red cell hypoplastic anemia, selective absence of red cell precursors and progenitors seen on bone marrow biopsy, and increased serum erythropoietin.</description>
        <dbReference type="MIM" id="617911"/>
    </disease>
    <text>The disease is caused by variants affecting the gene represented in this entry.</text>
</comment>
<comment type="pharmaceutical">
    <text>Used for the treatment of anemia. Available under the names Epogen (Amgen), Epogin (Chugai), Epomax (Elanex), Eprex (Janssen-Cilag), NeoRecormon or Recormon (Roche), Dynepo (Shire Pharmaceuticals) and Procrit (Ortho Biotech). Variations in the glycosylation pattern of EPO distinguishes these products. Epogen, Epogin, Eprex and Procrit are generically known as epoetin alfa, NeoRecormon and Recormon as epoetin beta, Dynepo as epoetin delta and Epomax as epoetin omega. Epoetin zeta is the name used for some 'biosimilars' forms of epoetin alfa and is available under the names Silapo (Stada) and Retacrit (Hospira). Darbepoetin alfa is a form created by 5 substitutions (Asn-57, Thr-59, Val-114, Asn-115 and Thr-117) that create 2 new N-glycosylation sites. It has a longer circulating half-life in vivo. It is available under the name Aranesp (Amgen). EPO is being much misused as a performance-enhancing drug in endurance athletes.</text>
</comment>
<comment type="similarity">
    <text evidence="10">Belongs to the EPO/TPO family.</text>
</comment>
<comment type="online information" name="Wikipedia">
    <link uri="https://en.wikipedia.org/wiki/Erythropoietin"/>
    <text>Erythropoietin entry</text>
</comment>
<comment type="online information" name="Protein Spotlight">
    <link uri="https://www.proteinspotlight.org/back_issues/084/"/>
    <text>Journey into a tiny world - Issue 84 of July 2007</text>
</comment>
<evidence type="ECO:0000269" key="1">
    <source>
    </source>
</evidence>
<evidence type="ECO:0000269" key="2">
    <source>
    </source>
</evidence>
<evidence type="ECO:0000269" key="3">
    <source>
    </source>
</evidence>
<evidence type="ECO:0000269" key="4">
    <source>
    </source>
</evidence>
<evidence type="ECO:0000269" key="5">
    <source>
    </source>
</evidence>
<evidence type="ECO:0000269" key="6">
    <source>
    </source>
</evidence>
<evidence type="ECO:0000269" key="7">
    <source>
    </source>
</evidence>
<evidence type="ECO:0000269" key="8">
    <source>
    </source>
</evidence>
<evidence type="ECO:0000303" key="9">
    <source>
    </source>
</evidence>
<evidence type="ECO:0000305" key="10"/>
<evidence type="ECO:0007829" key="11">
    <source>
        <dbReference type="PDB" id="1BUY"/>
    </source>
</evidence>
<evidence type="ECO:0007829" key="12">
    <source>
        <dbReference type="PDB" id="1EER"/>
    </source>
</evidence>
<accession>P01588</accession>
<accession>Q2M2L6</accession>
<accession>Q549U2</accession>
<accession>Q9UDZ0</accession>
<accession>Q9UEZ5</accession>
<accession>Q9UHA0</accession>
<dbReference type="EMBL" id="X02158">
    <property type="protein sequence ID" value="CAA26095.1"/>
    <property type="molecule type" value="Genomic_DNA"/>
</dbReference>
<dbReference type="EMBL" id="X02157">
    <property type="protein sequence ID" value="CAA26094.1"/>
    <property type="molecule type" value="mRNA"/>
</dbReference>
<dbReference type="EMBL" id="M11319">
    <property type="protein sequence ID" value="AAA52400.1"/>
    <property type="molecule type" value="Genomic_DNA"/>
</dbReference>
<dbReference type="EMBL" id="AF053356">
    <property type="protein sequence ID" value="AAC78791.1"/>
    <property type="molecule type" value="Genomic_DNA"/>
</dbReference>
<dbReference type="EMBL" id="AF202308">
    <property type="protein sequence ID" value="AAF23132.1"/>
    <property type="molecule type" value="Genomic_DNA"/>
</dbReference>
<dbReference type="EMBL" id="AF202306">
    <property type="protein sequence ID" value="AAF23132.1"/>
    <property type="status" value="JOINED"/>
    <property type="molecule type" value="Genomic_DNA"/>
</dbReference>
<dbReference type="EMBL" id="AF202307">
    <property type="protein sequence ID" value="AAF23132.1"/>
    <property type="status" value="JOINED"/>
    <property type="molecule type" value="Genomic_DNA"/>
</dbReference>
<dbReference type="EMBL" id="AH009004">
    <property type="protein sequence ID" value="AAF23133.1"/>
    <property type="molecule type" value="Genomic_DNA"/>
</dbReference>
<dbReference type="EMBL" id="AF202311">
    <property type="protein sequence ID" value="AAF17572.1"/>
    <property type="molecule type" value="Genomic_DNA"/>
</dbReference>
<dbReference type="EMBL" id="AF202314">
    <property type="protein sequence ID" value="AAF23134.1"/>
    <property type="molecule type" value="Genomic_DNA"/>
</dbReference>
<dbReference type="EMBL" id="AF202312">
    <property type="protein sequence ID" value="AAF23134.1"/>
    <property type="status" value="JOINED"/>
    <property type="molecule type" value="Genomic_DNA"/>
</dbReference>
<dbReference type="EMBL" id="AF202313">
    <property type="protein sequence ID" value="AAF23134.1"/>
    <property type="status" value="JOINED"/>
    <property type="molecule type" value="Genomic_DNA"/>
</dbReference>
<dbReference type="EMBL" id="AC009488">
    <property type="protein sequence ID" value="AAP22357.1"/>
    <property type="molecule type" value="Genomic_DNA"/>
</dbReference>
<dbReference type="EMBL" id="BC093628">
    <property type="protein sequence ID" value="AAH93628.1"/>
    <property type="molecule type" value="mRNA"/>
</dbReference>
<dbReference type="EMBL" id="BC111937">
    <property type="protein sequence ID" value="AAI11938.1"/>
    <property type="molecule type" value="mRNA"/>
</dbReference>
<dbReference type="EMBL" id="S65458">
    <property type="protein sequence ID" value="AAD13964.1"/>
    <property type="molecule type" value="mRNA"/>
</dbReference>
<dbReference type="CCDS" id="CCDS5705.1"/>
<dbReference type="PIR" id="A01855">
    <property type="entry name" value="ZUHU"/>
</dbReference>
<dbReference type="RefSeq" id="NP_000790.2">
    <property type="nucleotide sequence ID" value="NM_000799.4"/>
</dbReference>
<dbReference type="PDB" id="1BUY">
    <property type="method" value="NMR"/>
    <property type="chains" value="A=28-193"/>
</dbReference>
<dbReference type="PDB" id="1CN4">
    <property type="method" value="X-ray"/>
    <property type="resolution" value="2.80 A"/>
    <property type="chains" value="C=28-193"/>
</dbReference>
<dbReference type="PDB" id="1EER">
    <property type="method" value="X-ray"/>
    <property type="resolution" value="1.90 A"/>
    <property type="chains" value="A=28-193"/>
</dbReference>
<dbReference type="PDBsum" id="1BUY"/>
<dbReference type="PDBsum" id="1CN4"/>
<dbReference type="PDBsum" id="1EER"/>
<dbReference type="SMR" id="P01588"/>
<dbReference type="BioGRID" id="108370">
    <property type="interactions" value="35"/>
</dbReference>
<dbReference type="CORUM" id="P01588"/>
<dbReference type="DIP" id="DIP-5731N"/>
<dbReference type="FunCoup" id="P01588">
    <property type="interactions" value="843"/>
</dbReference>
<dbReference type="IntAct" id="P01588">
    <property type="interactions" value="11"/>
</dbReference>
<dbReference type="MINT" id="P01588"/>
<dbReference type="STRING" id="9606.ENSP00000252723"/>
<dbReference type="ChEMBL" id="CHEMBL5837"/>
<dbReference type="Allergome" id="11697">
    <property type="allergen name" value="Hom s EPO"/>
</dbReference>
<dbReference type="GlyConnect" id="140">
    <property type="glycosylation" value="212 N-Linked glycans (3 sites), 27 O-Linked glycans (1 site)"/>
</dbReference>
<dbReference type="GlyCosmos" id="P01588">
    <property type="glycosylation" value="4 sites, 210 glycans"/>
</dbReference>
<dbReference type="GlyGen" id="P01588">
    <property type="glycosylation" value="6 sites, 190 N-linked glycans (4 sites), 18 O-linked glycans (2 sites)"/>
</dbReference>
<dbReference type="iPTMnet" id="P01588"/>
<dbReference type="MetOSite" id="P01588"/>
<dbReference type="PhosphoSitePlus" id="P01588"/>
<dbReference type="BioMuta" id="EPO"/>
<dbReference type="DMDM" id="119526"/>
<dbReference type="MassIVE" id="P01588"/>
<dbReference type="PaxDb" id="9606-ENSP00000252723"/>
<dbReference type="PeptideAtlas" id="P01588"/>
<dbReference type="Antibodypedia" id="4151">
    <property type="antibodies" value="1306 antibodies from 40 providers"/>
</dbReference>
<dbReference type="DNASU" id="2056"/>
<dbReference type="Ensembl" id="ENST00000252723.3">
    <property type="protein sequence ID" value="ENSP00000252723.2"/>
    <property type="gene ID" value="ENSG00000130427.3"/>
</dbReference>
<dbReference type="GeneID" id="2056"/>
<dbReference type="KEGG" id="hsa:2056"/>
<dbReference type="MANE-Select" id="ENST00000252723.3">
    <property type="protein sequence ID" value="ENSP00000252723.2"/>
    <property type="RefSeq nucleotide sequence ID" value="NM_000799.4"/>
    <property type="RefSeq protein sequence ID" value="NP_000790.2"/>
</dbReference>
<dbReference type="UCSC" id="uc003uwi.5">
    <property type="organism name" value="human"/>
</dbReference>
<dbReference type="AGR" id="HGNC:3415"/>
<dbReference type="CTD" id="2056"/>
<dbReference type="DisGeNET" id="2056"/>
<dbReference type="GeneCards" id="EPO"/>
<dbReference type="HGNC" id="HGNC:3415">
    <property type="gene designation" value="EPO"/>
</dbReference>
<dbReference type="HPA" id="ENSG00000130427">
    <property type="expression patterns" value="Tissue enriched (liver)"/>
</dbReference>
<dbReference type="MalaCards" id="EPO"/>
<dbReference type="MIM" id="133170">
    <property type="type" value="gene"/>
</dbReference>
<dbReference type="MIM" id="612623">
    <property type="type" value="phenotype"/>
</dbReference>
<dbReference type="MIM" id="617907">
    <property type="type" value="phenotype"/>
</dbReference>
<dbReference type="MIM" id="617911">
    <property type="type" value="phenotype"/>
</dbReference>
<dbReference type="neXtProt" id="NX_P01588"/>
<dbReference type="OpenTargets" id="ENSG00000130427"/>
<dbReference type="Orphanet" id="247511">
    <property type="disease" value="Autosomal dominant secondary polycythemia"/>
</dbReference>
<dbReference type="PharmGKB" id="PA27833"/>
<dbReference type="VEuPathDB" id="HostDB:ENSG00000130427"/>
<dbReference type="eggNOG" id="ENOG502RXRC">
    <property type="taxonomic scope" value="Eukaryota"/>
</dbReference>
<dbReference type="GeneTree" id="ENSGT00390000017226"/>
<dbReference type="HOGENOM" id="CLU_110946_0_0_1"/>
<dbReference type="InParanoid" id="P01588"/>
<dbReference type="OMA" id="AMEFPRL"/>
<dbReference type="OrthoDB" id="9892121at2759"/>
<dbReference type="PAN-GO" id="P01588">
    <property type="GO annotations" value="7 GO annotations based on evolutionary models"/>
</dbReference>
<dbReference type="PhylomeDB" id="P01588"/>
<dbReference type="TreeFam" id="TF333413"/>
<dbReference type="PathwayCommons" id="P01588"/>
<dbReference type="Reactome" id="R-HSA-1234158">
    <property type="pathway name" value="Regulation of gene expression by Hypoxia-inducible Factor"/>
</dbReference>
<dbReference type="Reactome" id="R-HSA-9006335">
    <property type="pathway name" value="Signaling by Erythropoietin"/>
</dbReference>
<dbReference type="Reactome" id="R-HSA-9027276">
    <property type="pathway name" value="Erythropoietin activates Phosphoinositide-3-kinase (PI3K)"/>
</dbReference>
<dbReference type="Reactome" id="R-HSA-9027277">
    <property type="pathway name" value="Erythropoietin activates Phospholipase C gamma (PLCG)"/>
</dbReference>
<dbReference type="Reactome" id="R-HSA-9027283">
    <property type="pathway name" value="Erythropoietin activates STAT5"/>
</dbReference>
<dbReference type="Reactome" id="R-HSA-9027284">
    <property type="pathway name" value="Erythropoietin activates RAS"/>
</dbReference>
<dbReference type="SignaLink" id="P01588"/>
<dbReference type="SIGNOR" id="P01588"/>
<dbReference type="BioGRID-ORCS" id="2056">
    <property type="hits" value="14 hits in 1149 CRISPR screens"/>
</dbReference>
<dbReference type="CD-CODE" id="FB4E32DD">
    <property type="entry name" value="Presynaptic clusters and postsynaptic densities"/>
</dbReference>
<dbReference type="EvolutionaryTrace" id="P01588"/>
<dbReference type="GeneWiki" id="Erythropoietin"/>
<dbReference type="GenomeRNAi" id="2056"/>
<dbReference type="Pharos" id="P01588">
    <property type="development level" value="Tbio"/>
</dbReference>
<dbReference type="PRO" id="PR:P01588"/>
<dbReference type="Proteomes" id="UP000005640">
    <property type="component" value="Chromosome 7"/>
</dbReference>
<dbReference type="RNAct" id="P01588">
    <property type="molecule type" value="protein"/>
</dbReference>
<dbReference type="Bgee" id="ENSG00000130427">
    <property type="expression patterns" value="Expressed in right lobe of liver and 65 other cell types or tissues"/>
</dbReference>
<dbReference type="ExpressionAtlas" id="P01588">
    <property type="expression patterns" value="baseline and differential"/>
</dbReference>
<dbReference type="GO" id="GO:0044297">
    <property type="term" value="C:cell body"/>
    <property type="evidence" value="ECO:0007669"/>
    <property type="project" value="Ensembl"/>
</dbReference>
<dbReference type="GO" id="GO:0009986">
    <property type="term" value="C:cell surface"/>
    <property type="evidence" value="ECO:0000314"/>
    <property type="project" value="BHF-UCL"/>
</dbReference>
<dbReference type="GO" id="GO:0005576">
    <property type="term" value="C:extracellular region"/>
    <property type="evidence" value="ECO:0000304"/>
    <property type="project" value="Reactome"/>
</dbReference>
<dbReference type="GO" id="GO:0005615">
    <property type="term" value="C:extracellular space"/>
    <property type="evidence" value="ECO:0000314"/>
    <property type="project" value="UniProtKB"/>
</dbReference>
<dbReference type="GO" id="GO:0005125">
    <property type="term" value="F:cytokine activity"/>
    <property type="evidence" value="ECO:0000314"/>
    <property type="project" value="UniProtKB"/>
</dbReference>
<dbReference type="GO" id="GO:0005128">
    <property type="term" value="F:erythropoietin receptor binding"/>
    <property type="evidence" value="ECO:0000315"/>
    <property type="project" value="UniProtKB"/>
</dbReference>
<dbReference type="GO" id="GO:0005179">
    <property type="term" value="F:hormone activity"/>
    <property type="evidence" value="ECO:0000314"/>
    <property type="project" value="BHF-UCL"/>
</dbReference>
<dbReference type="GO" id="GO:0030295">
    <property type="term" value="F:protein kinase activator activity"/>
    <property type="evidence" value="ECO:0000318"/>
    <property type="project" value="GO_Central"/>
</dbReference>
<dbReference type="GO" id="GO:0006953">
    <property type="term" value="P:acute-phase response"/>
    <property type="evidence" value="ECO:0007669"/>
    <property type="project" value="Ensembl"/>
</dbReference>
<dbReference type="GO" id="GO:0008015">
    <property type="term" value="P:blood circulation"/>
    <property type="evidence" value="ECO:0000303"/>
    <property type="project" value="ProtInc"/>
</dbReference>
<dbReference type="GO" id="GO:0097696">
    <property type="term" value="P:cell surface receptor signaling pathway via STAT"/>
    <property type="evidence" value="ECO:0000314"/>
    <property type="project" value="BHF-UCL"/>
</dbReference>
<dbReference type="GO" id="GO:0071474">
    <property type="term" value="P:cellular hyperosmotic response"/>
    <property type="evidence" value="ECO:0000314"/>
    <property type="project" value="BHF-UCL"/>
</dbReference>
<dbReference type="GO" id="GO:0007566">
    <property type="term" value="P:embryo implantation"/>
    <property type="evidence" value="ECO:0007669"/>
    <property type="project" value="Ensembl"/>
</dbReference>
<dbReference type="GO" id="GO:0030218">
    <property type="term" value="P:erythrocyte differentiation"/>
    <property type="evidence" value="ECO:0000314"/>
    <property type="project" value="BHF-UCL"/>
</dbReference>
<dbReference type="GO" id="GO:0043249">
    <property type="term" value="P:erythrocyte maturation"/>
    <property type="evidence" value="ECO:0007669"/>
    <property type="project" value="UniProtKB-KW"/>
</dbReference>
<dbReference type="GO" id="GO:0038162">
    <property type="term" value="P:erythropoietin-mediated signaling pathway"/>
    <property type="evidence" value="ECO:0000314"/>
    <property type="project" value="UniProtKB"/>
</dbReference>
<dbReference type="GO" id="GO:0042541">
    <property type="term" value="P:hemoglobin biosynthetic process"/>
    <property type="evidence" value="ECO:0007669"/>
    <property type="project" value="Ensembl"/>
</dbReference>
<dbReference type="GO" id="GO:0033028">
    <property type="term" value="P:myeloid cell apoptotic process"/>
    <property type="evidence" value="ECO:0007669"/>
    <property type="project" value="Ensembl"/>
</dbReference>
<dbReference type="GO" id="GO:0010523">
    <property type="term" value="P:negative regulation of calcium ion transport into cytosol"/>
    <property type="evidence" value="ECO:0000314"/>
    <property type="project" value="BHF-UCL"/>
</dbReference>
<dbReference type="GO" id="GO:1902251">
    <property type="term" value="P:negative regulation of erythrocyte apoptotic process"/>
    <property type="evidence" value="ECO:0000314"/>
    <property type="project" value="BHF-UCL"/>
</dbReference>
<dbReference type="GO" id="GO:1902219">
    <property type="term" value="P:negative regulation of intrinsic apoptotic signaling pathway in response to osmotic stress"/>
    <property type="evidence" value="ECO:0000314"/>
    <property type="project" value="BHF-UCL"/>
</dbReference>
<dbReference type="GO" id="GO:0000122">
    <property type="term" value="P:negative regulation of transcription by RNA polymerase II"/>
    <property type="evidence" value="ECO:0000315"/>
    <property type="project" value="BHF-UCL"/>
</dbReference>
<dbReference type="GO" id="GO:0042104">
    <property type="term" value="P:positive regulation of activated T cell proliferation"/>
    <property type="evidence" value="ECO:0007669"/>
    <property type="project" value="Ensembl"/>
</dbReference>
<dbReference type="GO" id="GO:0008284">
    <property type="term" value="P:positive regulation of cell population proliferation"/>
    <property type="evidence" value="ECO:0000314"/>
    <property type="project" value="BHF-UCL"/>
</dbReference>
<dbReference type="GO" id="GO:0045893">
    <property type="term" value="P:positive regulation of DNA-templated transcription"/>
    <property type="evidence" value="ECO:0000314"/>
    <property type="project" value="BHF-UCL"/>
</dbReference>
<dbReference type="GO" id="GO:0070374">
    <property type="term" value="P:positive regulation of ERK1 and ERK2 cascade"/>
    <property type="evidence" value="ECO:0007669"/>
    <property type="project" value="Ensembl"/>
</dbReference>
<dbReference type="GO" id="GO:0045666">
    <property type="term" value="P:positive regulation of neuron differentiation"/>
    <property type="evidence" value="ECO:0007669"/>
    <property type="project" value="Ensembl"/>
</dbReference>
<dbReference type="GO" id="GO:0010976">
    <property type="term" value="P:positive regulation of neuron projection development"/>
    <property type="evidence" value="ECO:0007669"/>
    <property type="project" value="Ensembl"/>
</dbReference>
<dbReference type="GO" id="GO:0046579">
    <property type="term" value="P:positive regulation of Ras protein signal transduction"/>
    <property type="evidence" value="ECO:0000314"/>
    <property type="project" value="BHF-UCL"/>
</dbReference>
<dbReference type="GO" id="GO:0048678">
    <property type="term" value="P:response to axon injury"/>
    <property type="evidence" value="ECO:0007669"/>
    <property type="project" value="Ensembl"/>
</dbReference>
<dbReference type="GO" id="GO:0071548">
    <property type="term" value="P:response to dexamethasone"/>
    <property type="evidence" value="ECO:0007669"/>
    <property type="project" value="Ensembl"/>
</dbReference>
<dbReference type="GO" id="GO:0051602">
    <property type="term" value="P:response to electrical stimulus"/>
    <property type="evidence" value="ECO:0007669"/>
    <property type="project" value="Ensembl"/>
</dbReference>
<dbReference type="GO" id="GO:0043627">
    <property type="term" value="P:response to estrogen"/>
    <property type="evidence" value="ECO:0007669"/>
    <property type="project" value="Ensembl"/>
</dbReference>
<dbReference type="GO" id="GO:0055093">
    <property type="term" value="P:response to hyperoxia"/>
    <property type="evidence" value="ECO:0007669"/>
    <property type="project" value="Ensembl"/>
</dbReference>
<dbReference type="GO" id="GO:0001666">
    <property type="term" value="P:response to hypoxia"/>
    <property type="evidence" value="ECO:0007669"/>
    <property type="project" value="Ensembl"/>
</dbReference>
<dbReference type="GO" id="GO:0070555">
    <property type="term" value="P:response to interleukin-1"/>
    <property type="evidence" value="ECO:0007669"/>
    <property type="project" value="Ensembl"/>
</dbReference>
<dbReference type="GO" id="GO:0032496">
    <property type="term" value="P:response to lipopolysaccharide"/>
    <property type="evidence" value="ECO:0007669"/>
    <property type="project" value="Ensembl"/>
</dbReference>
<dbReference type="GO" id="GO:0009651">
    <property type="term" value="P:response to salt stress"/>
    <property type="evidence" value="ECO:0007669"/>
    <property type="project" value="Ensembl"/>
</dbReference>
<dbReference type="GO" id="GO:0033574">
    <property type="term" value="P:response to testosterone"/>
    <property type="evidence" value="ECO:0007669"/>
    <property type="project" value="Ensembl"/>
</dbReference>
<dbReference type="GO" id="GO:0033189">
    <property type="term" value="P:response to vitamin A"/>
    <property type="evidence" value="ECO:0007669"/>
    <property type="project" value="Ensembl"/>
</dbReference>
<dbReference type="GO" id="GO:0007165">
    <property type="term" value="P:signal transduction"/>
    <property type="evidence" value="ECO:0000303"/>
    <property type="project" value="ProtInc"/>
</dbReference>
<dbReference type="FunFam" id="1.20.1250.10:FF:000013">
    <property type="entry name" value="Erythropoietin"/>
    <property type="match status" value="1"/>
</dbReference>
<dbReference type="Gene3D" id="1.20.1250.10">
    <property type="match status" value="1"/>
</dbReference>
<dbReference type="InterPro" id="IPR009079">
    <property type="entry name" value="4_helix_cytokine-like_core"/>
</dbReference>
<dbReference type="InterPro" id="IPR019767">
    <property type="entry name" value="EPO/TPO_CS"/>
</dbReference>
<dbReference type="InterPro" id="IPR001323">
    <property type="entry name" value="EPO_TPO"/>
</dbReference>
<dbReference type="InterPro" id="IPR003013">
    <property type="entry name" value="Erythroptn"/>
</dbReference>
<dbReference type="PANTHER" id="PTHR10370">
    <property type="entry name" value="ERYTHROPOIETIN"/>
    <property type="match status" value="1"/>
</dbReference>
<dbReference type="PANTHER" id="PTHR10370:SF0">
    <property type="entry name" value="ERYTHROPOIETIN"/>
    <property type="match status" value="1"/>
</dbReference>
<dbReference type="Pfam" id="PF00758">
    <property type="entry name" value="EPO_TPO"/>
    <property type="match status" value="1"/>
</dbReference>
<dbReference type="PIRSF" id="PIRSF001951">
    <property type="entry name" value="EPO"/>
    <property type="match status" value="1"/>
</dbReference>
<dbReference type="PRINTS" id="PR00272">
    <property type="entry name" value="ERYTHROPTN"/>
</dbReference>
<dbReference type="SUPFAM" id="SSF47266">
    <property type="entry name" value="4-helical cytokines"/>
    <property type="match status" value="1"/>
</dbReference>
<dbReference type="PROSITE" id="PS00817">
    <property type="entry name" value="EPO_TPO"/>
    <property type="match status" value="1"/>
</dbReference>
<reference key="1">
    <citation type="journal article" date="1985" name="Nature">
        <title>Isolation and characterization of genomic and cDNA clones of human erythropoietin.</title>
        <authorList>
            <person name="Jacobs K."/>
            <person name="Shoemaker C."/>
            <person name="Rudersdorf R."/>
            <person name="Neill S.D."/>
            <person name="Kaufman R.J."/>
            <person name="Mufson A."/>
            <person name="Seehra J."/>
            <person name="Jones S.S."/>
            <person name="Hewick R."/>
            <person name="Fritsch E.F."/>
            <person name="Kawakita M."/>
            <person name="Shimizu T."/>
            <person name="Miyake T."/>
        </authorList>
    </citation>
    <scope>NUCLEOTIDE SEQUENCE [GENOMIC DNA / MRNA]</scope>
</reference>
<reference key="2">
    <citation type="journal article" date="1985" name="Proc. Natl. Acad. Sci. U.S.A.">
        <title>Cloning and expression of the human erythropoietin gene.</title>
        <authorList>
            <person name="Lin F.-K."/>
            <person name="Suggs S."/>
            <person name="Lin C.-H."/>
            <person name="Browne J.K."/>
            <person name="Smalling R."/>
            <person name="Egrie J.C."/>
            <person name="Chen K.K."/>
            <person name="Fox G.M."/>
            <person name="Martin F."/>
            <person name="Stabinsky Z."/>
            <person name="Badrawi S.M."/>
            <person name="Lai P.-H."/>
            <person name="Goldwasser E."/>
        </authorList>
    </citation>
    <scope>NUCLEOTIDE SEQUENCE [GENOMIC DNA]</scope>
    <scope>TISSUE SPECIFICITY</scope>
</reference>
<reference key="3">
    <citation type="journal article" date="1998" name="Genome Res.">
        <title>Large-scale sequencing of two regions in human chromosome 7q22: analysis of 650 kb of genomic sequence around the EPO and CUTL1 loci reveals 17 genes.</title>
        <authorList>
            <person name="Gloeckner G."/>
            <person name="Scherer S."/>
            <person name="Schattevoy R."/>
            <person name="Boright A.P."/>
            <person name="Weber J."/>
            <person name="Tsui L.-C."/>
            <person name="Rosenthal A."/>
        </authorList>
    </citation>
    <scope>NUCLEOTIDE SEQUENCE [GENOMIC DNA]</scope>
</reference>
<reference key="4">
    <citation type="submission" date="1999-11" db="EMBL/GenBank/DDBJ databases">
        <title>Erythropoietin gene sequence in the Quechua, a high altitude native population.</title>
        <authorList>
            <person name="Rupert J.L."/>
            <person name="Hochachka P.W."/>
        </authorList>
    </citation>
    <scope>NUCLEOTIDE SEQUENCE [GENOMIC DNA]</scope>
</reference>
<reference key="5">
    <citation type="journal article" date="2003" name="Nature">
        <title>The DNA sequence of human chromosome 7.</title>
        <authorList>
            <person name="Hillier L.W."/>
            <person name="Fulton R.S."/>
            <person name="Fulton L.A."/>
            <person name="Graves T.A."/>
            <person name="Pepin K.H."/>
            <person name="Wagner-McPherson C."/>
            <person name="Layman D."/>
            <person name="Maas J."/>
            <person name="Jaeger S."/>
            <person name="Walker R."/>
            <person name="Wylie K."/>
            <person name="Sekhon M."/>
            <person name="Becker M.C."/>
            <person name="O'Laughlin M.D."/>
            <person name="Schaller M.E."/>
            <person name="Fewell G.A."/>
            <person name="Delehaunty K.D."/>
            <person name="Miner T.L."/>
            <person name="Nash W.E."/>
            <person name="Cordes M."/>
            <person name="Du H."/>
            <person name="Sun H."/>
            <person name="Edwards J."/>
            <person name="Bradshaw-Cordum H."/>
            <person name="Ali J."/>
            <person name="Andrews S."/>
            <person name="Isak A."/>
            <person name="Vanbrunt A."/>
            <person name="Nguyen C."/>
            <person name="Du F."/>
            <person name="Lamar B."/>
            <person name="Courtney L."/>
            <person name="Kalicki J."/>
            <person name="Ozersky P."/>
            <person name="Bielicki L."/>
            <person name="Scott K."/>
            <person name="Holmes A."/>
            <person name="Harkins R."/>
            <person name="Harris A."/>
            <person name="Strong C.M."/>
            <person name="Hou S."/>
            <person name="Tomlinson C."/>
            <person name="Dauphin-Kohlberg S."/>
            <person name="Kozlowicz-Reilly A."/>
            <person name="Leonard S."/>
            <person name="Rohlfing T."/>
            <person name="Rock S.M."/>
            <person name="Tin-Wollam A.-M."/>
            <person name="Abbott A."/>
            <person name="Minx P."/>
            <person name="Maupin R."/>
            <person name="Strowmatt C."/>
            <person name="Latreille P."/>
            <person name="Miller N."/>
            <person name="Johnson D."/>
            <person name="Murray J."/>
            <person name="Woessner J.P."/>
            <person name="Wendl M.C."/>
            <person name="Yang S.-P."/>
            <person name="Schultz B.R."/>
            <person name="Wallis J.W."/>
            <person name="Spieth J."/>
            <person name="Bieri T.A."/>
            <person name="Nelson J.O."/>
            <person name="Berkowicz N."/>
            <person name="Wohldmann P.E."/>
            <person name="Cook L.L."/>
            <person name="Hickenbotham M.T."/>
            <person name="Eldred J."/>
            <person name="Williams D."/>
            <person name="Bedell J.A."/>
            <person name="Mardis E.R."/>
            <person name="Clifton S.W."/>
            <person name="Chissoe S.L."/>
            <person name="Marra M.A."/>
            <person name="Raymond C."/>
            <person name="Haugen E."/>
            <person name="Gillett W."/>
            <person name="Zhou Y."/>
            <person name="James R."/>
            <person name="Phelps K."/>
            <person name="Iadanoto S."/>
            <person name="Bubb K."/>
            <person name="Simms E."/>
            <person name="Levy R."/>
            <person name="Clendenning J."/>
            <person name="Kaul R."/>
            <person name="Kent W.J."/>
            <person name="Furey T.S."/>
            <person name="Baertsch R.A."/>
            <person name="Brent M.R."/>
            <person name="Keibler E."/>
            <person name="Flicek P."/>
            <person name="Bork P."/>
            <person name="Suyama M."/>
            <person name="Bailey J.A."/>
            <person name="Portnoy M.E."/>
            <person name="Torrents D."/>
            <person name="Chinwalla A.T."/>
            <person name="Gish W.R."/>
            <person name="Eddy S.R."/>
            <person name="McPherson J.D."/>
            <person name="Olson M.V."/>
            <person name="Eichler E.E."/>
            <person name="Green E.D."/>
            <person name="Waterston R.H."/>
            <person name="Wilson R.K."/>
        </authorList>
    </citation>
    <scope>NUCLEOTIDE SEQUENCE [LARGE SCALE GENOMIC DNA]</scope>
</reference>
<reference key="6">
    <citation type="journal article" date="2004" name="Genome Res.">
        <title>The status, quality, and expansion of the NIH full-length cDNA project: the Mammalian Gene Collection (MGC).</title>
        <authorList>
            <consortium name="The MGC Project Team"/>
        </authorList>
    </citation>
    <scope>NUCLEOTIDE SEQUENCE [LARGE SCALE MRNA]</scope>
    <source>
        <tissue>Brain</tissue>
    </source>
</reference>
<reference key="7">
    <citation type="journal article" date="1993" name="Biochem. Biophys. Res. Commun.">
        <title>Gene expression of mutant erythropoietin in hepatocellular carcinoma.</title>
        <authorList>
            <person name="Funakoshi A."/>
            <person name="Muta H."/>
            <person name="Baba T."/>
            <person name="Shimizu S."/>
        </authorList>
    </citation>
    <scope>NUCLEOTIDE SEQUENCE [MRNA] OF 58-193</scope>
    <scope>VARIANTS HEPATOCELLULAR CARCINOMA 131-SER-LEU-132 DELINS ASN-PHE AND GLN-149</scope>
</reference>
<reference key="8">
    <citation type="journal article" date="1986" name="J. Biol. Chem.">
        <title>Structural characterization of human erythropoietin.</title>
        <authorList>
            <person name="Lai P.H."/>
            <person name="Everett R."/>
            <person name="Wang F.F."/>
            <person name="Arakawa T."/>
            <person name="Goldwasser E."/>
        </authorList>
    </citation>
    <scope>PROTEIN SEQUENCE OF 28-193</scope>
    <scope>DISULFIDE BONDS</scope>
    <source>
        <tissue>Urine</tissue>
    </source>
</reference>
<reference key="9">
    <citation type="journal article" date="1984" name="J. Biol. Chem.">
        <title>Isolation of human erythropoietin with monoclonal antibodies.</title>
        <authorList>
            <person name="Yanagawa S."/>
            <person name="Hirade K."/>
            <person name="Ohnota H."/>
            <person name="Sasaki R."/>
            <person name="Chiba H."/>
            <person name="Ueda M."/>
            <person name="Goto M."/>
        </authorList>
    </citation>
    <scope>PRELIMINARY PROTEIN SEQUENCE OF 28-57</scope>
</reference>
<reference key="10">
    <citation type="journal article" date="1988" name="J. Biol. Chem.">
        <title>Comparative study of the asparagine-linked sugar chains of human erythropoietins purified from urine and the culture medium of recombinant Chinese hamster ovary cells.</title>
        <authorList>
            <person name="Takeuchi M."/>
            <person name="Takasaki S."/>
            <person name="Miyazaki H."/>
            <person name="Kato T."/>
            <person name="Hoshi S."/>
            <person name="Kochibe N."/>
            <person name="Kobata A."/>
        </authorList>
    </citation>
    <scope>STRUCTURE OF CARBOHYDRATES</scope>
</reference>
<reference key="11">
    <citation type="journal article" date="1988" name="Biochemistry">
        <title>Site-specific glycosylation of human recombinant erythropoietin: analysis of glycopeptides or peptides at each glycosylation site by fast atom bombardment mass spectrometry.</title>
        <authorList>
            <person name="Sasaki H."/>
            <person name="Ochi N."/>
            <person name="Dell A."/>
            <person name="Fukuda M."/>
        </authorList>
    </citation>
    <scope>STRUCTURE OF CARBOHYDRATES</scope>
</reference>
<reference key="12">
    <citation type="journal article" date="1991" name="Glycobiology">
        <title>Structures and functional roles of the sugar chains of human erythropoietins.</title>
        <authorList>
            <person name="Takeuchi M."/>
            <person name="Kobata A."/>
        </authorList>
    </citation>
    <scope>STRUCTURE OF CARBOHYDRATES</scope>
</reference>
<reference key="13">
    <citation type="journal article" date="2001" name="Blood">
        <title>Sugar profiling proves that human serum erythropoietin differs from recombinant human erythropoietin.</title>
        <authorList>
            <person name="Skibeli V."/>
            <person name="Nissen-Lie G."/>
            <person name="Torjesen P."/>
        </authorList>
    </citation>
    <scope>STRUCTURE OF CARBOHYDRATES</scope>
</reference>
<reference key="14">
    <citation type="journal article" date="2020" name="Mol. Cell. Biol.">
        <title>The endoplasmic reticulum cargo receptor SURF4 facilitates efficient erythropoietin secretion.</title>
        <authorList>
            <person name="Lin Z."/>
            <person name="King R."/>
            <person name="Tang V."/>
            <person name="Myers G."/>
            <person name="Balbin-Cuesta G."/>
            <person name="Friedman A."/>
            <person name="McGee B."/>
            <person name="Desch K."/>
            <person name="Ozel A.B."/>
            <person name="Siemieniak D."/>
            <person name="Reddy P."/>
            <person name="Emmer B."/>
            <person name="Khoriaty R."/>
        </authorList>
    </citation>
    <scope>SUBCELLULAR LOCATION</scope>
</reference>
<reference key="15">
    <citation type="journal article" date="2018" name="N. Engl. J. Med.">
        <title>A Gain-of-function mutation in EPO in familial erythrocytosis.</title>
        <authorList>
            <person name="Zmajkovic J."/>
            <person name="Lundberg P."/>
            <person name="Nienhold R."/>
            <person name="Torgersen M.L."/>
            <person name="Sundan A."/>
            <person name="Waage A."/>
            <person name="Skoda R.C."/>
        </authorList>
    </citation>
    <scope>INVOLVEMENT IN ECYT5</scope>
</reference>
<reference key="16">
    <citation type="journal article" date="1998" name="Nature">
        <title>Efficiency of signalling through cytokine receptors depends critically on receptor orientation.</title>
        <authorList>
            <person name="Syed R.S."/>
            <person name="Reid S.W."/>
            <person name="Li C."/>
            <person name="Cheetham J.C."/>
            <person name="Aoki K.H."/>
            <person name="Liu B."/>
            <person name="Zhan H."/>
            <person name="Osslund T.D."/>
            <person name="Chirino A.J."/>
            <person name="Zhang J."/>
            <person name="Finer-Moore J."/>
            <person name="Elliott S."/>
            <person name="Sitney K."/>
            <person name="Katz B.A."/>
            <person name="Matthews D.J."/>
            <person name="Wendoloski J.J."/>
            <person name="Egrie J."/>
            <person name="Stroud R.M."/>
        </authorList>
    </citation>
    <scope>X-RAY CRYSTALLOGRAPHY (2.8 ANGSTROMS) OF 28-193 IN COMPLEX WITH EPOR</scope>
    <scope>FUNCTION</scope>
</reference>
<reference key="17">
    <citation type="journal article" date="1998" name="Nat. Struct. Biol.">
        <title>NMR structure of human erythropoietin and a comparison with its receptor bound conformation.</title>
        <authorList>
            <person name="Cheetham J.C."/>
            <person name="Smith D.M."/>
            <person name="Aoki K.H."/>
            <person name="Stevenson J.L."/>
            <person name="Hoeffel T.J."/>
            <person name="Syed R.S."/>
            <person name="Egrie J."/>
            <person name="Harvey T.S."/>
        </authorList>
    </citation>
    <scope>STRUCTURE BY NMR OF 28-193</scope>
</reference>
<reference key="18">
    <citation type="journal article" date="2008" name="Proc. Natl. Acad. Sci. U.S.A.">
        <title>Promoter polymorphism of the erythropoietin gene in severe diabetic eye and kidney complications.</title>
        <authorList>
            <consortium name="Genetics of diabetes and diabetic complication study group"/>
            <person name="Tong Z."/>
            <person name="Yang Z."/>
            <person name="Patel S."/>
            <person name="Chen H."/>
            <person name="Gibbs D."/>
            <person name="Yang X."/>
            <person name="Hau V.S."/>
            <person name="Kaminoh Y."/>
            <person name="Harmon J."/>
            <person name="Pearson E."/>
            <person name="Buehler J."/>
            <person name="Chen Y."/>
            <person name="Yu B."/>
            <person name="Tinkham N.H."/>
            <person name="Zabriskie N.A."/>
            <person name="Zeng J."/>
            <person name="Luo L."/>
            <person name="Sun J.K."/>
            <person name="Prakash M."/>
            <person name="Hamam R.N."/>
            <person name="Tonna S."/>
            <person name="Constantine R."/>
            <person name="Ronquillo C.C."/>
            <person name="Sadda S."/>
            <person name="Avery R.L."/>
            <person name="Brand J.M."/>
            <person name="London N."/>
            <person name="Anduze A.L."/>
            <person name="King G.L."/>
            <person name="Bernstein P.S."/>
            <person name="Watkins S."/>
            <person name="Jorde L.B."/>
            <person name="Li D.Y."/>
            <person name="Aiello L.P."/>
            <person name="Pollak M.R."/>
            <person name="Zhang K."/>
        </authorList>
    </citation>
    <scope>INVOLVEMENT IN SUSCEPTIBILITY TO MICROVASCULAR COMPLICATIONS OF DIABETES TYPE 2</scope>
</reference>
<reference key="19">
    <citation type="journal article" date="2016" name="Haematologica">
        <title>Gene panel sequencing improves the diagnostic work-up of patients with idiopathic erythrocytosis and identifies new mutations.</title>
        <authorList>
            <person name="Camps C."/>
            <person name="Petousi N."/>
            <person name="Bento C."/>
            <person name="Cario H."/>
            <person name="Copley R.R."/>
            <person name="McMullin M.F."/>
            <person name="van Wijk R."/>
            <person name="Ratcliffe P.J."/>
            <person name="Robbins P.A."/>
            <person name="Taylor J.C."/>
        </authorList>
    </citation>
    <scope>INVOLVEMENT IN ECYT5</scope>
    <scope>VARIANTS ECYT5 ASN-70; ARG-84; LEU-114 AND CYS-147</scope>
    <scope>VARIANT GLY-99</scope>
</reference>
<reference key="20">
    <citation type="journal article" date="2017" name="Cell">
        <title>Functional selectivity in cytokine signaling revealed through a pathogenic EPO mutation.</title>
        <authorList>
            <person name="Kim A.R."/>
            <person name="Ulirsch J.C."/>
            <person name="Wilmes S."/>
            <person name="Unal E."/>
            <person name="Moraga I."/>
            <person name="Karakukcu M."/>
            <person name="Yuan D."/>
            <person name="Kazerounian S."/>
            <person name="Abdulhay N.J."/>
            <person name="King D.S."/>
            <person name="Gupta N."/>
            <person name="Gabriel S.B."/>
            <person name="Lander E.S."/>
            <person name="Patiroglu T."/>
            <person name="Ozcan A."/>
            <person name="Ozdemir M.A."/>
            <person name="Garcia K.C."/>
            <person name="Piehler J."/>
            <person name="Gazda H.T."/>
            <person name="Klein D.E."/>
            <person name="Sankaran V.G."/>
        </authorList>
    </citation>
    <scope>INVOLVEMENT IN DBAL</scope>
    <scope>VARIANT DBAL GLN-177</scope>
    <scope>CHARACTERIZATION OF VARIANT DBAL GLN-177</scope>
    <scope>FUNCTION</scope>
    <scope>MUTAGENESIS OF SER-127</scope>
</reference>
<sequence length="193" mass="21307">MGVHECPAWLWLLLSLLSLPLGLPVLGAPPRLICDSRVLERYLLEAKEAENITTGCAEHCSLNENITVPDTKVNFYAWKRMEVGQQAVEVWQGLALLSEAVLRGQALLVNSSQPWEPLQLHVDKAVSGLRSLTTLLRALGAQKEAISPPDAASAAPLRTITADTFRKLFRVYSNFLRGKLKLYTGEACRTGDR</sequence>
<feature type="signal peptide" evidence="6">
    <location>
        <begin position="1"/>
        <end position="27"/>
    </location>
</feature>
<feature type="chain" id="PRO_0000008401" description="Erythropoietin">
    <location>
        <begin position="28"/>
        <end position="193"/>
    </location>
</feature>
<feature type="glycosylation site" id="CAR_000052" description="N-linked (GlcNAc...) asparagine" evidence="6">
    <location>
        <position position="51"/>
    </location>
</feature>
<feature type="glycosylation site" id="CAR_000166" description="N-linked (GlcNAc...) asparagine" evidence="6">
    <location>
        <position position="65"/>
    </location>
</feature>
<feature type="glycosylation site" id="CAR_000192" description="N-linked (GlcNAc...) asparagine" evidence="6">
    <location>
        <position position="110"/>
    </location>
</feature>
<feature type="glycosylation site" description="O-linked (GalNAc...) serine" evidence="6">
    <location>
        <position position="153"/>
    </location>
</feature>
<feature type="disulfide bond" evidence="6">
    <location>
        <begin position="34"/>
        <end position="188"/>
    </location>
</feature>
<feature type="disulfide bond" evidence="6">
    <location>
        <begin position="56"/>
        <end position="60"/>
    </location>
</feature>
<feature type="sequence variant" id="VAR_080573" description="In ECYT5; uncertain significance; dbSNP:rs62483572." evidence="1">
    <original>D</original>
    <variation>N</variation>
    <location>
        <position position="70"/>
    </location>
</feature>
<feature type="sequence variant" id="VAR_080574" description="In ECYT5; uncertain significance; dbSNP:rs137953994." evidence="1">
    <original>G</original>
    <variation>R</variation>
    <location>
        <position position="84"/>
    </location>
</feature>
<feature type="sequence variant" id="VAR_080575" description="Found in a patient thought to have erythrocytosis, but had normal red cell mass; uncertain significance." evidence="1">
    <original>E</original>
    <variation>G</variation>
    <location>
        <position position="99"/>
    </location>
</feature>
<feature type="sequence variant" id="VAR_080576" description="In ECYT5; uncertain significance; dbSNP:rs11976235." evidence="1">
    <original>P</original>
    <variation>L</variation>
    <location>
        <position position="114"/>
    </location>
</feature>
<feature type="sequence variant" id="VAR_009870" description="In a hepatocellular carcinoma." evidence="7">
    <original>SL</original>
    <variation>NF</variation>
    <location>
        <begin position="131"/>
        <end position="132"/>
    </location>
</feature>
<feature type="sequence variant" id="VAR_080577" description="In ECYT5; uncertain significance; dbSNP:rs149431976." evidence="1">
    <original>S</original>
    <variation>C</variation>
    <location>
        <position position="147"/>
    </location>
</feature>
<feature type="sequence variant" id="VAR_009871" description="In a hepatocellular carcinoma." evidence="7">
    <original>P</original>
    <variation>Q</variation>
    <location>
        <position position="149"/>
    </location>
</feature>
<feature type="sequence variant" id="VAR_078447" description="In DBAL; loss of support of normal erythroid expansion or differentiation; reduced ability to promote EPOR dimer formation upon binding, resulting in reduced JAK2 activation and decreased STAT1 and STAT3 phosphorylation; mild decrease in affinity for EPOR; no effect on STAT5A phosphorylation; dbSNP:rs1358275550." evidence="2">
    <original>R</original>
    <variation>Q</variation>
    <location>
        <position position="177"/>
    </location>
</feature>
<feature type="mutagenesis site" description="Decreased erythrocyte proliferation; impaired EPOR dimerization following binding." evidence="2">
    <original>S</original>
    <variation>E</variation>
    <location>
        <position position="127"/>
    </location>
</feature>
<feature type="sequence conflict" description="In Ref. 1; CAA26095." evidence="10" ref="1">
    <original>E</original>
    <variation>Q</variation>
    <location>
        <position position="40"/>
    </location>
</feature>
<feature type="sequence conflict" description="In Ref. 8; AA sequence." evidence="10" ref="8">
    <original>Q</original>
    <variation>QQ</variation>
    <location>
        <position position="85"/>
    </location>
</feature>
<feature type="sequence conflict" description="In Ref. 1; CAA26095." evidence="10" ref="1">
    <original>G</original>
    <variation>R</variation>
    <location>
        <position position="140"/>
    </location>
</feature>
<feature type="helix" evidence="12">
    <location>
        <begin position="32"/>
        <end position="34"/>
    </location>
</feature>
<feature type="helix" evidence="12">
    <location>
        <begin position="36"/>
        <end position="52"/>
    </location>
</feature>
<feature type="helix" evidence="12">
    <location>
        <begin position="53"/>
        <end position="55"/>
    </location>
</feature>
<feature type="strand" evidence="11">
    <location>
        <begin position="57"/>
        <end position="60"/>
    </location>
</feature>
<feature type="strand" evidence="12">
    <location>
        <begin position="61"/>
        <end position="68"/>
    </location>
</feature>
<feature type="helix" evidence="12">
    <location>
        <begin position="75"/>
        <end position="78"/>
    </location>
</feature>
<feature type="strand" evidence="11">
    <location>
        <begin position="79"/>
        <end position="81"/>
    </location>
</feature>
<feature type="helix" evidence="12">
    <location>
        <begin position="83"/>
        <end position="109"/>
    </location>
</feature>
<feature type="helix" evidence="12">
    <location>
        <begin position="118"/>
        <end position="138"/>
    </location>
</feature>
<feature type="helix" evidence="12">
    <location>
        <begin position="141"/>
        <end position="147"/>
    </location>
</feature>
<feature type="strand" evidence="12">
    <location>
        <begin position="160"/>
        <end position="164"/>
    </location>
</feature>
<feature type="helix" evidence="12">
    <location>
        <begin position="165"/>
        <end position="177"/>
    </location>
</feature>
<feature type="helix" evidence="12">
    <location>
        <begin position="179"/>
        <end position="188"/>
    </location>
</feature>
<organism>
    <name type="scientific">Homo sapiens</name>
    <name type="common">Human</name>
    <dbReference type="NCBI Taxonomy" id="9606"/>
    <lineage>
        <taxon>Eukaryota</taxon>
        <taxon>Metazoa</taxon>
        <taxon>Chordata</taxon>
        <taxon>Craniata</taxon>
        <taxon>Vertebrata</taxon>
        <taxon>Euteleostomi</taxon>
        <taxon>Mammalia</taxon>
        <taxon>Eutheria</taxon>
        <taxon>Euarchontoglires</taxon>
        <taxon>Primates</taxon>
        <taxon>Haplorrhini</taxon>
        <taxon>Catarrhini</taxon>
        <taxon>Hominidae</taxon>
        <taxon>Homo</taxon>
    </lineage>
</organism>
<name>EPO_HUMAN</name>